<feature type="chain" id="PRO_0000042633" description="Solute carrier family 52, riboflavin transporter, member 2">
    <location>
        <begin position="1"/>
        <end position="450"/>
    </location>
</feature>
<feature type="transmembrane region" description="Helical" evidence="2">
    <location>
        <begin position="14"/>
        <end position="34"/>
    </location>
</feature>
<feature type="transmembrane region" description="Helical" evidence="2">
    <location>
        <begin position="47"/>
        <end position="67"/>
    </location>
</feature>
<feature type="transmembrane region" description="Helical" evidence="2">
    <location>
        <begin position="86"/>
        <end position="106"/>
    </location>
</feature>
<feature type="transmembrane region" description="Helical" evidence="2">
    <location>
        <begin position="112"/>
        <end position="132"/>
    </location>
</feature>
<feature type="transmembrane region" description="Helical" evidence="2">
    <location>
        <begin position="147"/>
        <end position="167"/>
    </location>
</feature>
<feature type="transmembrane region" description="Helical" evidence="2">
    <location>
        <begin position="201"/>
        <end position="221"/>
    </location>
</feature>
<feature type="transmembrane region" description="Helical" evidence="2">
    <location>
        <begin position="282"/>
        <end position="302"/>
    </location>
</feature>
<feature type="transmembrane region" description="Helical" evidence="2">
    <location>
        <begin position="317"/>
        <end position="337"/>
    </location>
</feature>
<feature type="transmembrane region" description="Helical" evidence="2">
    <location>
        <begin position="344"/>
        <end position="364"/>
    </location>
</feature>
<feature type="transmembrane region" description="Helical" evidence="2">
    <location>
        <begin position="369"/>
        <end position="389"/>
    </location>
</feature>
<feature type="transmembrane region" description="Helical" evidence="2">
    <location>
        <begin position="409"/>
        <end position="429"/>
    </location>
</feature>
<feature type="region of interest" description="Disordered" evidence="3">
    <location>
        <begin position="227"/>
        <end position="264"/>
    </location>
</feature>
<feature type="compositionally biased region" description="Low complexity" evidence="3">
    <location>
        <begin position="227"/>
        <end position="236"/>
    </location>
</feature>
<feature type="compositionally biased region" description="Acidic residues" evidence="3">
    <location>
        <begin position="242"/>
        <end position="252"/>
    </location>
</feature>
<feature type="glycosylation site" description="N-linked (GlcNAc...) asparagine" evidence="2">
    <location>
        <position position="178"/>
    </location>
</feature>
<feature type="splice variant" id="VSP_015940" description="In isoform 2." evidence="4">
    <original>SLAGLCGLSLLG</original>
    <variation>CSRTPKPPWGRA</variation>
    <location>
        <begin position="340"/>
        <end position="351"/>
    </location>
</feature>
<feature type="splice variant" id="VSP_015941" description="In isoform 2." evidence="4">
    <location>
        <begin position="352"/>
        <end position="450"/>
    </location>
</feature>
<sequence>MAAPPLGRLVLTHLLVALFGMGSWAAVNGIWVELPVVVKELPEGWSLPSYLSVLVALGNLGLLLVTLWRRLARGKGEQVPIRVVQGLGIVGTGLLASLWNHVAPVAGKPYSVAFLTLAFVLALACCASNVTFLPFLSHLPPPFLRSFFLGQGLSALLPCVLALGQGVGRLECLHVPANRTTGPPIEVSPINFPERFSATTFFWVLTALLGTSAAAFQGLLLLLPSPTSEPTTGTGLRVETPGTEEEEEEEEASPLQEPPGQVAGIVSSPDPKAHQLFSSRSACLLGLLAITNALTNGVLPAVQSFSCLPYGRLAYHLAVVLGSCANPLACFLAMAVLCRSLAGLCGLSLLGMLLGSYLMTLAALSPCPPLVGTSAGVVLVVLSWVLCAGTFSYIKVAISSMLHSGGRPALLAAGVAIQVGSLLGAVAMFPPTSIYRVFRSGKDCVDQCGL</sequence>
<dbReference type="EMBL" id="AK008081">
    <property type="protein sequence ID" value="BAB25447.1"/>
    <property type="molecule type" value="mRNA"/>
</dbReference>
<dbReference type="EMBL" id="AK029579">
    <property type="protein sequence ID" value="BAC26522.1"/>
    <property type="molecule type" value="mRNA"/>
</dbReference>
<dbReference type="EMBL" id="AK032015">
    <property type="protein sequence ID" value="BAC27648.1"/>
    <property type="molecule type" value="mRNA"/>
</dbReference>
<dbReference type="EMBL" id="AK080449">
    <property type="protein sequence ID" value="BAC37920.1"/>
    <property type="molecule type" value="mRNA"/>
</dbReference>
<dbReference type="EMBL" id="AK142597">
    <property type="protein sequence ID" value="BAE25123.1"/>
    <property type="molecule type" value="mRNA"/>
</dbReference>
<dbReference type="EMBL" id="AK152335">
    <property type="protein sequence ID" value="BAE31133.1"/>
    <property type="molecule type" value="mRNA"/>
</dbReference>
<dbReference type="EMBL" id="AK161447">
    <property type="protein sequence ID" value="BAE36401.1"/>
    <property type="molecule type" value="mRNA"/>
</dbReference>
<dbReference type="EMBL" id="BC016264">
    <property type="protein sequence ID" value="AAH16264.1"/>
    <property type="molecule type" value="mRNA"/>
</dbReference>
<dbReference type="CCDS" id="CCDS27575.1">
    <molecule id="Q9D8F3-1"/>
</dbReference>
<dbReference type="RefSeq" id="NP_083919.1">
    <molecule id="Q9D8F3-1"/>
    <property type="nucleotide sequence ID" value="NM_029643.4"/>
</dbReference>
<dbReference type="RefSeq" id="XP_006521214.1">
    <molecule id="Q9D8F3-1"/>
    <property type="nucleotide sequence ID" value="XM_006521151.5"/>
</dbReference>
<dbReference type="SMR" id="Q9D8F3"/>
<dbReference type="FunCoup" id="Q9D8F3">
    <property type="interactions" value="557"/>
</dbReference>
<dbReference type="IntAct" id="Q9D8F3">
    <property type="interactions" value="1"/>
</dbReference>
<dbReference type="STRING" id="10090.ENSMUSP00000023220"/>
<dbReference type="GlyCosmos" id="Q9D8F3">
    <property type="glycosylation" value="1 site, No reported glycans"/>
</dbReference>
<dbReference type="GlyGen" id="Q9D8F3">
    <property type="glycosylation" value="1 site, 1 N-linked glycan (1 site)"/>
</dbReference>
<dbReference type="iPTMnet" id="Q9D8F3"/>
<dbReference type="PhosphoSitePlus" id="Q9D8F3"/>
<dbReference type="PaxDb" id="10090-ENSMUSP00000023220"/>
<dbReference type="PeptideAtlas" id="Q9D8F3"/>
<dbReference type="ProteomicsDB" id="260910">
    <molecule id="Q9D8F3-1"/>
</dbReference>
<dbReference type="ProteomicsDB" id="260911">
    <molecule id="Q9D8F3-2"/>
</dbReference>
<dbReference type="DNASU" id="52710"/>
<dbReference type="Ensembl" id="ENSMUST00000023220.10">
    <molecule id="Q9D8F3-1"/>
    <property type="protein sequence ID" value="ENSMUSP00000023220.9"/>
    <property type="gene ID" value="ENSMUSG00000022560.10"/>
</dbReference>
<dbReference type="GeneID" id="52710"/>
<dbReference type="KEGG" id="mmu:52710"/>
<dbReference type="UCSC" id="uc007wkt.1">
    <molecule id="Q9D8F3-2"/>
    <property type="organism name" value="mouse"/>
</dbReference>
<dbReference type="UCSC" id="uc007wku.1">
    <molecule id="Q9D8F3-1"/>
    <property type="organism name" value="mouse"/>
</dbReference>
<dbReference type="AGR" id="MGI:1289288"/>
<dbReference type="CTD" id="79581"/>
<dbReference type="MGI" id="MGI:1289288">
    <property type="gene designation" value="Slc52a2"/>
</dbReference>
<dbReference type="VEuPathDB" id="HostDB:ENSMUSG00000022560"/>
<dbReference type="eggNOG" id="KOG4255">
    <property type="taxonomic scope" value="Eukaryota"/>
</dbReference>
<dbReference type="GeneTree" id="ENSGT00390000003774"/>
<dbReference type="HOGENOM" id="CLU_034789_1_0_1"/>
<dbReference type="InParanoid" id="Q9D8F3"/>
<dbReference type="OMA" id="SWVLCMG"/>
<dbReference type="OrthoDB" id="9995836at2759"/>
<dbReference type="PhylomeDB" id="Q9D8F3"/>
<dbReference type="TreeFam" id="TF314820"/>
<dbReference type="Reactome" id="R-MMU-196843">
    <property type="pathway name" value="Vitamin B2 (riboflavin) metabolism"/>
</dbReference>
<dbReference type="BioGRID-ORCS" id="52710">
    <property type="hits" value="10 hits in 82 CRISPR screens"/>
</dbReference>
<dbReference type="ChiTaRS" id="Slc52a2">
    <property type="organism name" value="mouse"/>
</dbReference>
<dbReference type="PRO" id="PR:Q9D8F3"/>
<dbReference type="Proteomes" id="UP000000589">
    <property type="component" value="Chromosome 15"/>
</dbReference>
<dbReference type="RNAct" id="Q9D8F3">
    <property type="molecule type" value="protein"/>
</dbReference>
<dbReference type="Bgee" id="ENSMUSG00000022560">
    <property type="expression patterns" value="Expressed in external carotid artery and 252 other cell types or tissues"/>
</dbReference>
<dbReference type="GO" id="GO:0005886">
    <property type="term" value="C:plasma membrane"/>
    <property type="evidence" value="ECO:0000314"/>
    <property type="project" value="MGI"/>
</dbReference>
<dbReference type="GO" id="GO:0062124">
    <property type="term" value="F:4-hydroxybutyrate receptor activity"/>
    <property type="evidence" value="ECO:0000250"/>
    <property type="project" value="UniProtKB"/>
</dbReference>
<dbReference type="GO" id="GO:0032217">
    <property type="term" value="F:riboflavin transmembrane transporter activity"/>
    <property type="evidence" value="ECO:0000314"/>
    <property type="project" value="MGI"/>
</dbReference>
<dbReference type="GO" id="GO:0072388">
    <property type="term" value="P:flavin adenine dinucleotide biosynthetic process"/>
    <property type="evidence" value="ECO:0000314"/>
    <property type="project" value="MGI"/>
</dbReference>
<dbReference type="GO" id="GO:0006771">
    <property type="term" value="P:riboflavin metabolic process"/>
    <property type="evidence" value="ECO:0000314"/>
    <property type="project" value="MGI"/>
</dbReference>
<dbReference type="GO" id="GO:0032218">
    <property type="term" value="P:riboflavin transport"/>
    <property type="evidence" value="ECO:0000250"/>
    <property type="project" value="UniProtKB"/>
</dbReference>
<dbReference type="InterPro" id="IPR009357">
    <property type="entry name" value="Riboflavin_transptr"/>
</dbReference>
<dbReference type="PANTHER" id="PTHR12929">
    <property type="entry name" value="SOLUTE CARRIER FAMILY 52"/>
    <property type="match status" value="1"/>
</dbReference>
<dbReference type="PANTHER" id="PTHR12929:SF1">
    <property type="entry name" value="SOLUTE CARRIER FAMILY 52, RIBOFLAVIN TRANSPORTER, MEMBER 2"/>
    <property type="match status" value="1"/>
</dbReference>
<dbReference type="Pfam" id="PF06237">
    <property type="entry name" value="SLC52_ribofla_tr"/>
    <property type="match status" value="1"/>
</dbReference>
<accession>Q9D8F3</accession>
<accession>Q8CCV8</accession>
<gene>
    <name type="primary">Slc52a2</name>
    <name type="synonym">Gpr172b</name>
    <name type="synonym">Rft1</name>
</gene>
<comment type="function">
    <text evidence="1">Plasma membrane transporter mediating the uptake by cells of the water soluble vitamin B2/riboflavin that plays a key role in biochemical oxidation-reduction reactions of the carbohydrate, lipid, and amino acid metabolism. May also act as a receptor for 4-hydroxybutyrate.</text>
</comment>
<comment type="catalytic activity">
    <reaction evidence="1">
        <text>riboflavin(in) = riboflavin(out)</text>
        <dbReference type="Rhea" id="RHEA:35015"/>
        <dbReference type="ChEBI" id="CHEBI:57986"/>
    </reaction>
</comment>
<comment type="activity regulation">
    <text evidence="1">Riboflavin transport is Na(+)-independent but moderately pH-sensitive (By similarity). Activity is strongly inhibited by riboflavin analogs, such as lumiflavin (By similarity). Weakly inhibited by flavin adenine dinucleotide (FAD) and flavin mononucleotide (FMN) (By similarity).</text>
</comment>
<comment type="subcellular location">
    <subcellularLocation>
        <location evidence="1">Cell membrane</location>
        <topology evidence="2">Multi-pass membrane protein</topology>
    </subcellularLocation>
</comment>
<comment type="alternative products">
    <event type="alternative splicing"/>
    <isoform>
        <id>Q9D8F3-1</id>
        <name>1</name>
        <sequence type="displayed"/>
    </isoform>
    <isoform>
        <id>Q9D8F3-2</id>
        <name>2</name>
        <sequence type="described" ref="VSP_015940 VSP_015941"/>
    </isoform>
</comment>
<comment type="similarity">
    <text evidence="5">Belongs to the riboflavin transporter family.</text>
</comment>
<organism>
    <name type="scientific">Mus musculus</name>
    <name type="common">Mouse</name>
    <dbReference type="NCBI Taxonomy" id="10090"/>
    <lineage>
        <taxon>Eukaryota</taxon>
        <taxon>Metazoa</taxon>
        <taxon>Chordata</taxon>
        <taxon>Craniata</taxon>
        <taxon>Vertebrata</taxon>
        <taxon>Euteleostomi</taxon>
        <taxon>Mammalia</taxon>
        <taxon>Eutheria</taxon>
        <taxon>Euarchontoglires</taxon>
        <taxon>Glires</taxon>
        <taxon>Rodentia</taxon>
        <taxon>Myomorpha</taxon>
        <taxon>Muroidea</taxon>
        <taxon>Muridae</taxon>
        <taxon>Murinae</taxon>
        <taxon>Mus</taxon>
        <taxon>Mus</taxon>
    </lineage>
</organism>
<reference key="1">
    <citation type="journal article" date="2005" name="Science">
        <title>The transcriptional landscape of the mammalian genome.</title>
        <authorList>
            <person name="Carninci P."/>
            <person name="Kasukawa T."/>
            <person name="Katayama S."/>
            <person name="Gough J."/>
            <person name="Frith M.C."/>
            <person name="Maeda N."/>
            <person name="Oyama R."/>
            <person name="Ravasi T."/>
            <person name="Lenhard B."/>
            <person name="Wells C."/>
            <person name="Kodzius R."/>
            <person name="Shimokawa K."/>
            <person name="Bajic V.B."/>
            <person name="Brenner S.E."/>
            <person name="Batalov S."/>
            <person name="Forrest A.R."/>
            <person name="Zavolan M."/>
            <person name="Davis M.J."/>
            <person name="Wilming L.G."/>
            <person name="Aidinis V."/>
            <person name="Allen J.E."/>
            <person name="Ambesi-Impiombato A."/>
            <person name="Apweiler R."/>
            <person name="Aturaliya R.N."/>
            <person name="Bailey T.L."/>
            <person name="Bansal M."/>
            <person name="Baxter L."/>
            <person name="Beisel K.W."/>
            <person name="Bersano T."/>
            <person name="Bono H."/>
            <person name="Chalk A.M."/>
            <person name="Chiu K.P."/>
            <person name="Choudhary V."/>
            <person name="Christoffels A."/>
            <person name="Clutterbuck D.R."/>
            <person name="Crowe M.L."/>
            <person name="Dalla E."/>
            <person name="Dalrymple B.P."/>
            <person name="de Bono B."/>
            <person name="Della Gatta G."/>
            <person name="di Bernardo D."/>
            <person name="Down T."/>
            <person name="Engstrom P."/>
            <person name="Fagiolini M."/>
            <person name="Faulkner G."/>
            <person name="Fletcher C.F."/>
            <person name="Fukushima T."/>
            <person name="Furuno M."/>
            <person name="Futaki S."/>
            <person name="Gariboldi M."/>
            <person name="Georgii-Hemming P."/>
            <person name="Gingeras T.R."/>
            <person name="Gojobori T."/>
            <person name="Green R.E."/>
            <person name="Gustincich S."/>
            <person name="Harbers M."/>
            <person name="Hayashi Y."/>
            <person name="Hensch T.K."/>
            <person name="Hirokawa N."/>
            <person name="Hill D."/>
            <person name="Huminiecki L."/>
            <person name="Iacono M."/>
            <person name="Ikeo K."/>
            <person name="Iwama A."/>
            <person name="Ishikawa T."/>
            <person name="Jakt M."/>
            <person name="Kanapin A."/>
            <person name="Katoh M."/>
            <person name="Kawasawa Y."/>
            <person name="Kelso J."/>
            <person name="Kitamura H."/>
            <person name="Kitano H."/>
            <person name="Kollias G."/>
            <person name="Krishnan S.P."/>
            <person name="Kruger A."/>
            <person name="Kummerfeld S.K."/>
            <person name="Kurochkin I.V."/>
            <person name="Lareau L.F."/>
            <person name="Lazarevic D."/>
            <person name="Lipovich L."/>
            <person name="Liu J."/>
            <person name="Liuni S."/>
            <person name="McWilliam S."/>
            <person name="Madan Babu M."/>
            <person name="Madera M."/>
            <person name="Marchionni L."/>
            <person name="Matsuda H."/>
            <person name="Matsuzawa S."/>
            <person name="Miki H."/>
            <person name="Mignone F."/>
            <person name="Miyake S."/>
            <person name="Morris K."/>
            <person name="Mottagui-Tabar S."/>
            <person name="Mulder N."/>
            <person name="Nakano N."/>
            <person name="Nakauchi H."/>
            <person name="Ng P."/>
            <person name="Nilsson R."/>
            <person name="Nishiguchi S."/>
            <person name="Nishikawa S."/>
            <person name="Nori F."/>
            <person name="Ohara O."/>
            <person name="Okazaki Y."/>
            <person name="Orlando V."/>
            <person name="Pang K.C."/>
            <person name="Pavan W.J."/>
            <person name="Pavesi G."/>
            <person name="Pesole G."/>
            <person name="Petrovsky N."/>
            <person name="Piazza S."/>
            <person name="Reed J."/>
            <person name="Reid J.F."/>
            <person name="Ring B.Z."/>
            <person name="Ringwald M."/>
            <person name="Rost B."/>
            <person name="Ruan Y."/>
            <person name="Salzberg S.L."/>
            <person name="Sandelin A."/>
            <person name="Schneider C."/>
            <person name="Schoenbach C."/>
            <person name="Sekiguchi K."/>
            <person name="Semple C.A."/>
            <person name="Seno S."/>
            <person name="Sessa L."/>
            <person name="Sheng Y."/>
            <person name="Shibata Y."/>
            <person name="Shimada H."/>
            <person name="Shimada K."/>
            <person name="Silva D."/>
            <person name="Sinclair B."/>
            <person name="Sperling S."/>
            <person name="Stupka E."/>
            <person name="Sugiura K."/>
            <person name="Sultana R."/>
            <person name="Takenaka Y."/>
            <person name="Taki K."/>
            <person name="Tammoja K."/>
            <person name="Tan S.L."/>
            <person name="Tang S."/>
            <person name="Taylor M.S."/>
            <person name="Tegner J."/>
            <person name="Teichmann S.A."/>
            <person name="Ueda H.R."/>
            <person name="van Nimwegen E."/>
            <person name="Verardo R."/>
            <person name="Wei C.L."/>
            <person name="Yagi K."/>
            <person name="Yamanishi H."/>
            <person name="Zabarovsky E."/>
            <person name="Zhu S."/>
            <person name="Zimmer A."/>
            <person name="Hide W."/>
            <person name="Bult C."/>
            <person name="Grimmond S.M."/>
            <person name="Teasdale R.D."/>
            <person name="Liu E.T."/>
            <person name="Brusic V."/>
            <person name="Quackenbush J."/>
            <person name="Wahlestedt C."/>
            <person name="Mattick J.S."/>
            <person name="Hume D.A."/>
            <person name="Kai C."/>
            <person name="Sasaki D."/>
            <person name="Tomaru Y."/>
            <person name="Fukuda S."/>
            <person name="Kanamori-Katayama M."/>
            <person name="Suzuki M."/>
            <person name="Aoki J."/>
            <person name="Arakawa T."/>
            <person name="Iida J."/>
            <person name="Imamura K."/>
            <person name="Itoh M."/>
            <person name="Kato T."/>
            <person name="Kawaji H."/>
            <person name="Kawagashira N."/>
            <person name="Kawashima T."/>
            <person name="Kojima M."/>
            <person name="Kondo S."/>
            <person name="Konno H."/>
            <person name="Nakano K."/>
            <person name="Ninomiya N."/>
            <person name="Nishio T."/>
            <person name="Okada M."/>
            <person name="Plessy C."/>
            <person name="Shibata K."/>
            <person name="Shiraki T."/>
            <person name="Suzuki S."/>
            <person name="Tagami M."/>
            <person name="Waki K."/>
            <person name="Watahiki A."/>
            <person name="Okamura-Oho Y."/>
            <person name="Suzuki H."/>
            <person name="Kawai J."/>
            <person name="Hayashizaki Y."/>
        </authorList>
    </citation>
    <scope>NUCLEOTIDE SEQUENCE [LARGE SCALE MRNA] (ISOFORMS 1 AND 2)</scope>
    <source>
        <strain>C57BL/6J</strain>
        <tissue>Cerebellum</tissue>
        <tissue>Small intestine</tissue>
        <tissue>Testis</tissue>
    </source>
</reference>
<reference key="2">
    <citation type="journal article" date="2004" name="Genome Res.">
        <title>The status, quality, and expansion of the NIH full-length cDNA project: the Mammalian Gene Collection (MGC).</title>
        <authorList>
            <consortium name="The MGC Project Team"/>
        </authorList>
    </citation>
    <scope>NUCLEOTIDE SEQUENCE [LARGE SCALE MRNA] (ISOFORM 1)</scope>
    <source>
        <strain>FVB/N</strain>
        <tissue>Salivary gland</tissue>
    </source>
</reference>
<evidence type="ECO:0000250" key="1">
    <source>
        <dbReference type="UniProtKB" id="Q9HAB3"/>
    </source>
</evidence>
<evidence type="ECO:0000255" key="2"/>
<evidence type="ECO:0000256" key="3">
    <source>
        <dbReference type="SAM" id="MobiDB-lite"/>
    </source>
</evidence>
<evidence type="ECO:0000303" key="4">
    <source>
    </source>
</evidence>
<evidence type="ECO:0000305" key="5"/>
<name>S52A2_MOUSE</name>
<proteinExistence type="evidence at transcript level"/>
<protein>
    <recommendedName>
        <fullName>Solute carrier family 52, riboflavin transporter, member 2</fullName>
    </recommendedName>
    <alternativeName>
        <fullName>Porcine endogenous retrovirus A receptor 2 homolog</fullName>
        <shortName>PERV-A receptor 2 homolog</shortName>
    </alternativeName>
    <alternativeName>
        <fullName>Protein GPR172B</fullName>
    </alternativeName>
    <alternativeName>
        <fullName>Riboflavin transporter 1</fullName>
        <shortName>mRFT1</shortName>
    </alternativeName>
</protein>
<keyword id="KW-0025">Alternative splicing</keyword>
<keyword id="KW-1003">Cell membrane</keyword>
<keyword id="KW-0325">Glycoprotein</keyword>
<keyword id="KW-0472">Membrane</keyword>
<keyword id="KW-0675">Receptor</keyword>
<keyword id="KW-1185">Reference proteome</keyword>
<keyword id="KW-0812">Transmembrane</keyword>
<keyword id="KW-1133">Transmembrane helix</keyword>
<keyword id="KW-0813">Transport</keyword>